<name>SHEP_DROYA</name>
<organism>
    <name type="scientific">Drosophila yakuba</name>
    <name type="common">Fruit fly</name>
    <dbReference type="NCBI Taxonomy" id="7245"/>
    <lineage>
        <taxon>Eukaryota</taxon>
        <taxon>Metazoa</taxon>
        <taxon>Ecdysozoa</taxon>
        <taxon>Arthropoda</taxon>
        <taxon>Hexapoda</taxon>
        <taxon>Insecta</taxon>
        <taxon>Pterygota</taxon>
        <taxon>Neoptera</taxon>
        <taxon>Endopterygota</taxon>
        <taxon>Diptera</taxon>
        <taxon>Brachycera</taxon>
        <taxon>Muscomorpha</taxon>
        <taxon>Ephydroidea</taxon>
        <taxon>Drosophilidae</taxon>
        <taxon>Drosophila</taxon>
        <taxon>Sophophora</taxon>
    </lineage>
</organism>
<feature type="chain" id="PRO_0000379505" description="Protein alan shepard">
    <location>
        <begin position="1"/>
        <end position="582"/>
    </location>
</feature>
<feature type="domain" description="RRM 1" evidence="2">
    <location>
        <begin position="231"/>
        <end position="304"/>
    </location>
</feature>
<feature type="domain" description="RRM 2" evidence="2">
    <location>
        <begin position="310"/>
        <end position="389"/>
    </location>
</feature>
<feature type="region of interest" description="Disordered" evidence="3">
    <location>
        <begin position="1"/>
        <end position="73"/>
    </location>
</feature>
<feature type="region of interest" description="Disordered" evidence="3">
    <location>
        <begin position="164"/>
        <end position="225"/>
    </location>
</feature>
<feature type="region of interest" description="Disordered" evidence="3">
    <location>
        <begin position="555"/>
        <end position="582"/>
    </location>
</feature>
<feature type="compositionally biased region" description="Pro residues" evidence="3">
    <location>
        <begin position="1"/>
        <end position="12"/>
    </location>
</feature>
<feature type="compositionally biased region" description="Low complexity" evidence="3">
    <location>
        <begin position="13"/>
        <end position="24"/>
    </location>
</feature>
<feature type="compositionally biased region" description="Gly residues" evidence="3">
    <location>
        <begin position="25"/>
        <end position="36"/>
    </location>
</feature>
<feature type="compositionally biased region" description="Polar residues" evidence="3">
    <location>
        <begin position="39"/>
        <end position="57"/>
    </location>
</feature>
<feature type="compositionally biased region" description="Low complexity" evidence="3">
    <location>
        <begin position="58"/>
        <end position="72"/>
    </location>
</feature>
<feature type="compositionally biased region" description="Low complexity" evidence="3">
    <location>
        <begin position="178"/>
        <end position="225"/>
    </location>
</feature>
<feature type="modified residue" description="Phosphotyrosine" evidence="1">
    <location>
        <position position="5"/>
    </location>
</feature>
<feature type="modified residue" description="Phosphotyrosine" evidence="1">
    <location>
        <position position="125"/>
    </location>
</feature>
<feature type="modified residue" description="Phosphotyrosine" evidence="1">
    <location>
        <position position="142"/>
    </location>
</feature>
<reference evidence="4" key="1">
    <citation type="journal article" date="2007" name="Nature">
        <title>Evolution of genes and genomes on the Drosophila phylogeny.</title>
        <authorList>
            <consortium name="Drosophila 12 genomes consortium"/>
        </authorList>
    </citation>
    <scope>NUCLEOTIDE SEQUENCE [LARGE SCALE GENOMIC DNA]</scope>
    <source>
        <strain evidence="4">Tai18E2 / Tucson 14021-0261.01</strain>
    </source>
</reference>
<keyword id="KW-0597">Phosphoprotein</keyword>
<keyword id="KW-0677">Repeat</keyword>
<keyword id="KW-0694">RNA-binding</keyword>
<accession>B4PIS2</accession>
<gene>
    <name evidence="1" type="primary">shep</name>
    <name type="ORF">GE20568</name>
</gene>
<sequence>MHPRYSPAPPPQQQQQMGGPLHQQQGGGGGGGGGIRGPSNAQQLPPQIPRSQNYSNGSSSSAAAAPPTSRSAFPGAPLTASAVALKGALPQRPPAMTSPAAAAAGAALAAGAPYRGAASWTPQGYAPAAAAAAAAVAQQAAYRYTAPLPQPAYAAYTPHTATTPATTTYGQRVPTAASPSNTNSSSSSNTGSQSGTLSTSLSNTTNTNTNMGPNGTVQNQNQQGGEQLSKTNLYIRGLQQGTTDKDLVNMCAQYGTIISTKAILDKTTNKCKGYGFVDFEQPAFAECAVKGLQGKGVQAQMAKQQEQDPTNLYIANLPPHFKETDLEAMLSKYGQVVSTRILRDQQMNSKGVGFARMESREKCEQIIQMFNGNTIPGAKDPLLVKFADGGPKKKNLFKTPDPNARAWRDVSAEGIPVAYDPTMQQNGVSVNVGTPIGVPYSRFSAPQVGGYPVAGSQWIPGYMMTQPITQVDDQTSYSPQYMQMAAAPQLGVTSYKPEAVNQVQPRGISMMVSGDTGVPYGTMMPQLATLQIGNSYISPTYPYYAPPPTIIPTMPMTDSEQASTAASPDEAYTQYPHQAAPK</sequence>
<comment type="function">
    <text evidence="1">Has a role in the perception of gravity.</text>
</comment>
<comment type="miscellaneous">
    <text>Named after Alan Bartlett Shepard, Jr. who was the second person and the first American in space and the fifth person to walk on the moon.</text>
</comment>
<protein>
    <recommendedName>
        <fullName>Protein alan shepard</fullName>
    </recommendedName>
</protein>
<evidence type="ECO:0000250" key="1">
    <source>
        <dbReference type="UniProtKB" id="Q8MSV2"/>
    </source>
</evidence>
<evidence type="ECO:0000255" key="2">
    <source>
        <dbReference type="PROSITE-ProRule" id="PRU00176"/>
    </source>
</evidence>
<evidence type="ECO:0000256" key="3">
    <source>
        <dbReference type="SAM" id="MobiDB-lite"/>
    </source>
</evidence>
<evidence type="ECO:0000312" key="4">
    <source>
        <dbReference type="EMBL" id="EDW93492.1"/>
    </source>
</evidence>
<dbReference type="EMBL" id="CM000159">
    <property type="protein sequence ID" value="EDW93492.1"/>
    <property type="molecule type" value="Genomic_DNA"/>
</dbReference>
<dbReference type="SMR" id="B4PIS2"/>
<dbReference type="EnsemblMetazoa" id="FBtr0267086">
    <property type="protein sequence ID" value="FBpp0265578"/>
    <property type="gene ID" value="FBgn0237877"/>
</dbReference>
<dbReference type="EnsemblMetazoa" id="XM_002093744.4">
    <property type="protein sequence ID" value="XP_002093780.1"/>
    <property type="gene ID" value="LOC6533045"/>
</dbReference>
<dbReference type="GeneID" id="6533045"/>
<dbReference type="KEGG" id="dya:Dyak_GE20568"/>
<dbReference type="eggNOG" id="KOG4733">
    <property type="taxonomic scope" value="Eukaryota"/>
</dbReference>
<dbReference type="HOGENOM" id="CLU_016278_1_0_1"/>
<dbReference type="OMA" id="FESPACA"/>
<dbReference type="OrthoDB" id="271725at2759"/>
<dbReference type="PhylomeDB" id="B4PIS2"/>
<dbReference type="Proteomes" id="UP000002282">
    <property type="component" value="Chromosome 3L"/>
</dbReference>
<dbReference type="GO" id="GO:1990904">
    <property type="term" value="C:ribonucleoprotein complex"/>
    <property type="evidence" value="ECO:0007669"/>
    <property type="project" value="InterPro"/>
</dbReference>
<dbReference type="GO" id="GO:0003723">
    <property type="term" value="F:RNA binding"/>
    <property type="evidence" value="ECO:0007669"/>
    <property type="project" value="UniProtKB-KW"/>
</dbReference>
<dbReference type="GO" id="GO:0009629">
    <property type="term" value="P:response to gravity"/>
    <property type="evidence" value="ECO:0000250"/>
    <property type="project" value="UniProtKB"/>
</dbReference>
<dbReference type="CDD" id="cd12243">
    <property type="entry name" value="RRM1_MSSP"/>
    <property type="match status" value="1"/>
</dbReference>
<dbReference type="CDD" id="cd12244">
    <property type="entry name" value="RRM2_MSSP"/>
    <property type="match status" value="1"/>
</dbReference>
<dbReference type="FunFam" id="3.30.70.330:FF:000169">
    <property type="entry name" value="protein alan shepard isoform X4"/>
    <property type="match status" value="1"/>
</dbReference>
<dbReference type="FunFam" id="3.30.70.330:FF:000491">
    <property type="entry name" value="protein alan shepard isoform X6"/>
    <property type="match status" value="1"/>
</dbReference>
<dbReference type="Gene3D" id="3.30.70.330">
    <property type="match status" value="2"/>
</dbReference>
<dbReference type="InterPro" id="IPR002343">
    <property type="entry name" value="Hud_Sxl_RNA"/>
</dbReference>
<dbReference type="InterPro" id="IPR012677">
    <property type="entry name" value="Nucleotide-bd_a/b_plait_sf"/>
</dbReference>
<dbReference type="InterPro" id="IPR035979">
    <property type="entry name" value="RBD_domain_sf"/>
</dbReference>
<dbReference type="InterPro" id="IPR000504">
    <property type="entry name" value="RRM_dom"/>
</dbReference>
<dbReference type="PANTHER" id="PTHR24012">
    <property type="entry name" value="RNA BINDING PROTEIN"/>
    <property type="match status" value="1"/>
</dbReference>
<dbReference type="Pfam" id="PF00076">
    <property type="entry name" value="RRM_1"/>
    <property type="match status" value="2"/>
</dbReference>
<dbReference type="PRINTS" id="PR00961">
    <property type="entry name" value="HUDSXLRNA"/>
</dbReference>
<dbReference type="SMART" id="SM00360">
    <property type="entry name" value="RRM"/>
    <property type="match status" value="2"/>
</dbReference>
<dbReference type="SUPFAM" id="SSF54928">
    <property type="entry name" value="RNA-binding domain, RBD"/>
    <property type="match status" value="2"/>
</dbReference>
<dbReference type="PROSITE" id="PS50102">
    <property type="entry name" value="RRM"/>
    <property type="match status" value="2"/>
</dbReference>
<proteinExistence type="inferred from homology"/>